<proteinExistence type="evidence at transcript level"/>
<protein>
    <recommendedName>
        <fullName>Small cysteine-rich outer membrane protein OmcA</fullName>
        <shortName>Small-CRP</shortName>
    </recommendedName>
    <alternativeName>
        <fullName>9 kDa cysteine-rich lipoprotein</fullName>
        <shortName>9kDa-CRP</shortName>
    </alternativeName>
</protein>
<dbReference type="EMBL" id="X54450">
    <property type="protein sequence ID" value="CAA38316.1"/>
    <property type="molecule type" value="Genomic_DNA"/>
</dbReference>
<dbReference type="EMBL" id="AM884176">
    <property type="protein sequence ID" value="CAP04142.1"/>
    <property type="molecule type" value="Genomic_DNA"/>
</dbReference>
<dbReference type="PIR" id="S12125">
    <property type="entry name" value="S12125"/>
</dbReference>
<dbReference type="RefSeq" id="WP_009873814.1">
    <property type="nucleotide sequence ID" value="NC_010287.1"/>
</dbReference>
<dbReference type="RefSeq" id="YP_001654775.1">
    <property type="nucleotide sequence ID" value="NC_010287.1"/>
</dbReference>
<dbReference type="KEGG" id="ctb:CTL0703"/>
<dbReference type="PATRIC" id="fig|471472.4.peg.755"/>
<dbReference type="HOGENOM" id="CLU_2463467_0_0_0"/>
<dbReference type="Proteomes" id="UP001154402">
    <property type="component" value="Chromosome"/>
</dbReference>
<dbReference type="GO" id="GO:0009279">
    <property type="term" value="C:cell outer membrane"/>
    <property type="evidence" value="ECO:0007669"/>
    <property type="project" value="UniProtKB-SubCell"/>
</dbReference>
<dbReference type="GO" id="GO:0005201">
    <property type="term" value="F:extracellular matrix structural constituent"/>
    <property type="evidence" value="ECO:0007669"/>
    <property type="project" value="InterPro"/>
</dbReference>
<dbReference type="GO" id="GO:0008360">
    <property type="term" value="P:regulation of cell shape"/>
    <property type="evidence" value="ECO:0007669"/>
    <property type="project" value="UniProtKB-KW"/>
</dbReference>
<dbReference type="InterPro" id="IPR003517">
    <property type="entry name" value="Cys-rich_OMP3_Chlamydia"/>
</dbReference>
<dbReference type="Pfam" id="PF03503">
    <property type="entry name" value="Chlam_OMP3"/>
    <property type="match status" value="1"/>
</dbReference>
<dbReference type="PRINTS" id="PR01335">
    <property type="entry name" value="CHLAMIDIAOM3"/>
</dbReference>
<dbReference type="PROSITE" id="PS51257">
    <property type="entry name" value="PROKAR_LIPOPROTEIN"/>
    <property type="match status" value="1"/>
</dbReference>
<sequence length="88" mass="9279">MKKTALLAALCSVVSLSSCCRIVDCCFEDPCAPIQCSPCESKKKDVDGGCNSCNGYVPACKPCGGDTHQDAEHGPQAREIPVDGKCRQ</sequence>
<gene>
    <name type="primary">omcA</name>
    <name type="synonym">omp3</name>
    <name type="ordered locus">CTL0703</name>
</gene>
<evidence type="ECO:0000250" key="1"/>
<evidence type="ECO:0000255" key="2">
    <source>
        <dbReference type="PROSITE-ProRule" id="PRU00303"/>
    </source>
</evidence>
<evidence type="ECO:0000256" key="3">
    <source>
        <dbReference type="SAM" id="MobiDB-lite"/>
    </source>
</evidence>
<evidence type="ECO:0000305" key="4"/>
<comment type="function">
    <text evidence="1">In elementary bodies (EBs, the infectious stage, which is able to survive outside the host cell) provides the structural integrity of the outer envelope through disulfide cross-links with the large cysteine-rich periplasmic protein and the major outer membrane porin. It has been described in publications as the Sarkosyl-insoluble COMC (Chlamydia outer membrane complex), and serves as the functional equivalent of peptidoglycan (By similarity).</text>
</comment>
<comment type="subunit">
    <text evidence="1">Part of a disulfide cross-linked outer membrane complex (COMC) composed of the major outer membrane porin (MOMP), the small cysteine-rich protein (OmcA) and the large cysteine-rich periplasmic protein (OmcB).</text>
</comment>
<comment type="subcellular location">
    <subcellularLocation>
        <location evidence="4">Cell outer membrane</location>
        <topology evidence="2">Lipid-anchor</topology>
    </subcellularLocation>
    <text>The protein moiety probably penetrates into the periplasm.</text>
</comment>
<comment type="developmental stage">
    <text>It is present but the disulfide bonds are reduced in reticulate bodies (RBs).</text>
</comment>
<feature type="signal peptide" evidence="2">
    <location>
        <begin position="1"/>
        <end position="18"/>
    </location>
</feature>
<feature type="chain" id="PRO_0000417576" description="Small cysteine-rich outer membrane protein OmcA">
    <location>
        <begin position="19"/>
        <end position="88"/>
    </location>
</feature>
<feature type="region of interest" description="Disordered" evidence="3">
    <location>
        <begin position="67"/>
        <end position="88"/>
    </location>
</feature>
<feature type="lipid moiety-binding region" description="N-palmitoyl cysteine" evidence="4">
    <location>
        <position position="19"/>
    </location>
</feature>
<feature type="lipid moiety-binding region" description="S-diacylglycerol cysteine" evidence="4">
    <location>
        <position position="19"/>
    </location>
</feature>
<feature type="sequence conflict" description="In Ref. 1; CAA38316." evidence="4" ref="1">
    <original>A</original>
    <variation>R</variation>
    <location>
        <position position="32"/>
    </location>
</feature>
<reference key="1">
    <citation type="journal article" date="1990" name="Mol. Microbiol.">
        <title>Cysteine-rich outer membrane proteins of Chlamydia trachomatis display compensatory sequence changes between biovariants.</title>
        <authorList>
            <person name="Allen J.E."/>
            <person name="Cerrone M.C."/>
            <person name="Beatty P.R."/>
            <person name="Stephens R.S."/>
        </authorList>
    </citation>
    <scope>NUCLEOTIDE SEQUENCE [GENOMIC DNA]</scope>
    <source>
        <strain>ATCC VR-902B / DSM 19102 / 434/Bu</strain>
    </source>
</reference>
<reference key="2">
    <citation type="journal article" date="2008" name="Genome Res.">
        <title>Chlamydia trachomatis: genome sequence analysis of lymphogranuloma venereum isolates.</title>
        <authorList>
            <person name="Thomson N.R."/>
            <person name="Holden M.T.G."/>
            <person name="Carder C."/>
            <person name="Lennard N."/>
            <person name="Lockey S.J."/>
            <person name="Marsh P."/>
            <person name="Skipp P."/>
            <person name="O'Connor C.D."/>
            <person name="Goodhead I."/>
            <person name="Norbertzcak H."/>
            <person name="Harris B."/>
            <person name="Ormond D."/>
            <person name="Rance R."/>
            <person name="Quail M.A."/>
            <person name="Parkhill J."/>
            <person name="Stephens R.S."/>
            <person name="Clarke I.N."/>
        </authorList>
    </citation>
    <scope>NUCLEOTIDE SEQUENCE [LARGE SCALE GENOMIC DNA]</scope>
    <source>
        <strain>ATCC VR-902B / DSM 19102 / 434/Bu</strain>
    </source>
</reference>
<accession>B0B816</accession>
<accession>P18585</accession>
<accession>P21356</accession>
<organism>
    <name type="scientific">Chlamydia trachomatis serovar L2 (strain ATCC VR-902B / DSM 19102 / 434/Bu)</name>
    <dbReference type="NCBI Taxonomy" id="471472"/>
    <lineage>
        <taxon>Bacteria</taxon>
        <taxon>Pseudomonadati</taxon>
        <taxon>Chlamydiota</taxon>
        <taxon>Chlamydiia</taxon>
        <taxon>Chlamydiales</taxon>
        <taxon>Chlamydiaceae</taxon>
        <taxon>Chlamydia/Chlamydophila group</taxon>
        <taxon>Chlamydia</taxon>
    </lineage>
</organism>
<name>OMCA_CHLT2</name>
<keyword id="KW-0998">Cell outer membrane</keyword>
<keyword id="KW-0133">Cell shape</keyword>
<keyword id="KW-1015">Disulfide bond</keyword>
<keyword id="KW-0449">Lipoprotein</keyword>
<keyword id="KW-0472">Membrane</keyword>
<keyword id="KW-0564">Palmitate</keyword>
<keyword id="KW-0732">Signal</keyword>